<accession>Q8IWT1</accession>
<accession>E9PPT5</accession>
<accession>Q6PIG5</accession>
<sequence length="228" mass="24969">MPGAGDGGKAPARWLGTGLLGLFLLPVTLSLEVSVGKATDIYAVNGTEILLPCTFSSCFGFEDLHFRWTYNSSDAFKILIEGTVKNEKSDPKVTLKDDDRITLVGSTKEKMNNISIVLRDLEFSDTGKYTCHVKNPKENNLQHHATIFLQVVDRLEEVDNTVTLIILAVVGGVIGLLILILLIKKLIIFILKKTREKKKECLVSSSGNDNTENGLPGSKAEEKPPSKV</sequence>
<proteinExistence type="evidence at protein level"/>
<evidence type="ECO:0000255" key="1"/>
<evidence type="ECO:0000255" key="2">
    <source>
        <dbReference type="PROSITE-ProRule" id="PRU00114"/>
    </source>
</evidence>
<evidence type="ECO:0000256" key="3">
    <source>
        <dbReference type="SAM" id="MobiDB-lite"/>
    </source>
</evidence>
<evidence type="ECO:0000269" key="4">
    <source>
    </source>
</evidence>
<evidence type="ECO:0000269" key="5">
    <source>
    </source>
</evidence>
<evidence type="ECO:0000269" key="6">
    <source>
    </source>
</evidence>
<evidence type="ECO:0000269" key="7">
    <source>
    </source>
</evidence>
<evidence type="ECO:0000269" key="8">
    <source>
    </source>
</evidence>
<evidence type="ECO:0000269" key="9">
    <source>
    </source>
</evidence>
<evidence type="ECO:0000305" key="10"/>
<evidence type="ECO:0000305" key="11">
    <source>
    </source>
</evidence>
<evidence type="ECO:0000312" key="12">
    <source>
        <dbReference type="HGNC" id="HGNC:10592"/>
    </source>
</evidence>
<evidence type="ECO:0007744" key="13">
    <source>
        <dbReference type="PDB" id="4MZ2"/>
    </source>
</evidence>
<evidence type="ECO:0007744" key="14">
    <source>
        <dbReference type="PDB" id="4MZ3"/>
    </source>
</evidence>
<evidence type="ECO:0007744" key="15">
    <source>
        <dbReference type="PDB" id="7DTD"/>
    </source>
</evidence>
<evidence type="ECO:0007829" key="16">
    <source>
        <dbReference type="PDB" id="4MZ3"/>
    </source>
</evidence>
<evidence type="ECO:0007829" key="17">
    <source>
        <dbReference type="PDB" id="5XAW"/>
    </source>
</evidence>
<evidence type="ECO:0007829" key="18">
    <source>
        <dbReference type="PDB" id="6VSV"/>
    </source>
</evidence>
<feature type="signal peptide" evidence="1">
    <location>
        <begin position="1"/>
        <end position="30"/>
    </location>
</feature>
<feature type="chain" id="PRO_0000014937" description="Sodium channel regulatory subunit beta-4">
    <location>
        <begin position="31"/>
        <end position="228"/>
    </location>
</feature>
<feature type="topological domain" description="Extracellular" evidence="1">
    <location>
        <begin position="31"/>
        <end position="162"/>
    </location>
</feature>
<feature type="transmembrane region" description="Helical" evidence="1">
    <location>
        <begin position="163"/>
        <end position="183"/>
    </location>
</feature>
<feature type="topological domain" description="Cytoplasmic" evidence="1">
    <location>
        <begin position="184"/>
        <end position="228"/>
    </location>
</feature>
<feature type="domain" description="Ig-like C2-type" evidence="2">
    <location>
        <begin position="31"/>
        <end position="148"/>
    </location>
</feature>
<feature type="region of interest" description="Disordered" evidence="3">
    <location>
        <begin position="200"/>
        <end position="228"/>
    </location>
</feature>
<feature type="compositionally biased region" description="Polar residues" evidence="3">
    <location>
        <begin position="203"/>
        <end position="213"/>
    </location>
</feature>
<feature type="compositionally biased region" description="Basic and acidic residues" evidence="3">
    <location>
        <begin position="219"/>
        <end position="228"/>
    </location>
</feature>
<feature type="glycosylation site" description="N-linked (GlcNAc...) asparagine" evidence="1">
    <location>
        <position position="45"/>
    </location>
</feature>
<feature type="glycosylation site" description="N-linked (GlcNAc...) asparagine" evidence="1">
    <location>
        <position position="71"/>
    </location>
</feature>
<feature type="glycosylation site" description="N-linked (GlcNAc...) asparagine" evidence="1">
    <location>
        <position position="113"/>
    </location>
</feature>
<feature type="disulfide bond" evidence="2 8 9 13 15">
    <location>
        <begin position="53"/>
        <end position="131"/>
    </location>
</feature>
<feature type="disulfide bond" description="Interchain; with alpha subunit" evidence="2 8 9 15">
    <location>
        <position position="58"/>
    </location>
</feature>
<feature type="splice variant" id="VSP_053913" description="In isoform 2." evidence="10">
    <location>
        <begin position="1"/>
        <end position="110"/>
    </location>
</feature>
<feature type="splice variant" id="VSP_046971" description="In isoform 3." evidence="10">
    <original>GLFLLPVTLSLEVSVGKATDIYAVNGTEILLPCTFSSCFGFEDLHFRWTYNSSDAFKILIEGTVKNEKSDPKVTLKDDDRITLVGSTKEKMNNISIVLRDLEFSDTGKYTCHVKNPKENNLQHHATIFLQVVDRL</original>
    <variation>V</variation>
    <location>
        <begin position="21"/>
        <end position="155"/>
    </location>
</feature>
<feature type="sequence variant" id="VAR_071317" description="In ATFB17; dbSNP:rs587777559." evidence="7">
    <original>V</original>
    <variation>G</variation>
    <location>
        <position position="162"/>
    </location>
</feature>
<feature type="sequence variant" id="VAR_071318" description="In ATFB17; dbSNP:rs587777560." evidence="7">
    <original>I</original>
    <variation>L</variation>
    <location>
        <position position="166"/>
    </location>
</feature>
<feature type="sequence variant" id="VAR_043488" description="In LQT10; increase in late sodium current; dbSNP:rs121434386." evidence="5">
    <original>L</original>
    <variation>F</variation>
    <location>
        <position position="179"/>
    </location>
</feature>
<feature type="mutagenesis site" description="Abolishes regulation of channel activity." evidence="8">
    <original>C</original>
    <variation>A</variation>
    <location>
        <position position="58"/>
    </location>
</feature>
<feature type="mutagenesis site" description="Decreases protein stability. Causes conformation changes that impair interaction with the alpha subunit." evidence="8">
    <original>C</original>
    <variation>A</variation>
    <variation>W</variation>
    <location>
        <position position="131"/>
    </location>
</feature>
<feature type="sequence conflict" description="In Ref. 3; AAH35017." evidence="10" ref="3">
    <original>D</original>
    <variation>Y</variation>
    <location>
        <position position="40"/>
    </location>
</feature>
<feature type="strand" evidence="17">
    <location>
        <begin position="32"/>
        <end position="34"/>
    </location>
</feature>
<feature type="strand" evidence="18">
    <location>
        <begin position="39"/>
        <end position="44"/>
    </location>
</feature>
<feature type="strand" evidence="18">
    <location>
        <begin position="49"/>
        <end position="51"/>
    </location>
</feature>
<feature type="turn" evidence="16">
    <location>
        <begin position="58"/>
        <end position="60"/>
    </location>
</feature>
<feature type="strand" evidence="18">
    <location>
        <begin position="62"/>
        <end position="71"/>
    </location>
</feature>
<feature type="strand" evidence="18">
    <location>
        <begin position="76"/>
        <end position="86"/>
    </location>
</feature>
<feature type="strand" evidence="18">
    <location>
        <begin position="92"/>
        <end position="96"/>
    </location>
</feature>
<feature type="strand" evidence="18">
    <location>
        <begin position="101"/>
        <end position="103"/>
    </location>
</feature>
<feature type="strand" evidence="18">
    <location>
        <begin position="116"/>
        <end position="118"/>
    </location>
</feature>
<feature type="helix" evidence="18">
    <location>
        <begin position="123"/>
        <end position="125"/>
    </location>
</feature>
<feature type="strand" evidence="18">
    <location>
        <begin position="127"/>
        <end position="135"/>
    </location>
</feature>
<feature type="helix" evidence="18">
    <location>
        <begin position="136"/>
        <end position="138"/>
    </location>
</feature>
<feature type="strand" evidence="18">
    <location>
        <begin position="140"/>
        <end position="143"/>
    </location>
</feature>
<feature type="strand" evidence="18">
    <location>
        <begin position="147"/>
        <end position="152"/>
    </location>
</feature>
<protein>
    <recommendedName>
        <fullName evidence="11">Sodium channel regulatory subunit beta-4</fullName>
    </recommendedName>
</protein>
<reference key="1">
    <citation type="journal article" date="2003" name="J. Neurosci.">
        <title>Sodium channel beta4, a new disulfide-linked auxiliary subunit with similarity to beta2.</title>
        <authorList>
            <person name="Yu F.H."/>
            <person name="Westenbroek R.E."/>
            <person name="Silos-Santiago I."/>
            <person name="McCormick K.A."/>
            <person name="Lawson D."/>
            <person name="Ge P."/>
            <person name="Ferriera H."/>
            <person name="Lilly J."/>
            <person name="DiStefano P.S."/>
            <person name="Catterall W.A."/>
            <person name="Scheuer T."/>
            <person name="Curtis R."/>
        </authorList>
    </citation>
    <scope>NUCLEOTIDE SEQUENCE [MRNA] (ISOFORM 1)</scope>
    <scope>TISSUE SPECIFICITY</scope>
    <source>
        <tissue>Brain</tissue>
    </source>
</reference>
<reference key="2">
    <citation type="journal article" date="2006" name="Nature">
        <title>Human chromosome 11 DNA sequence and analysis including novel gene identification.</title>
        <authorList>
            <person name="Taylor T.D."/>
            <person name="Noguchi H."/>
            <person name="Totoki Y."/>
            <person name="Toyoda A."/>
            <person name="Kuroki Y."/>
            <person name="Dewar K."/>
            <person name="Lloyd C."/>
            <person name="Itoh T."/>
            <person name="Takeda T."/>
            <person name="Kim D.-W."/>
            <person name="She X."/>
            <person name="Barlow K.F."/>
            <person name="Bloom T."/>
            <person name="Bruford E."/>
            <person name="Chang J.L."/>
            <person name="Cuomo C.A."/>
            <person name="Eichler E."/>
            <person name="FitzGerald M.G."/>
            <person name="Jaffe D.B."/>
            <person name="LaButti K."/>
            <person name="Nicol R."/>
            <person name="Park H.-S."/>
            <person name="Seaman C."/>
            <person name="Sougnez C."/>
            <person name="Yang X."/>
            <person name="Zimmer A.R."/>
            <person name="Zody M.C."/>
            <person name="Birren B.W."/>
            <person name="Nusbaum C."/>
            <person name="Fujiyama A."/>
            <person name="Hattori M."/>
            <person name="Rogers J."/>
            <person name="Lander E.S."/>
            <person name="Sakaki Y."/>
        </authorList>
    </citation>
    <scope>NUCLEOTIDE SEQUENCE [LARGE SCALE GENOMIC DNA]</scope>
</reference>
<reference key="3">
    <citation type="journal article" date="2004" name="Genome Res.">
        <title>The status, quality, and expansion of the NIH full-length cDNA project: the Mammalian Gene Collection (MGC).</title>
        <authorList>
            <consortium name="The MGC Project Team"/>
        </authorList>
    </citation>
    <scope>PARTIAL NUCLEOTIDE SEQUENCE [LARGE SCALE MRNA] (ISOFORM 2)</scope>
    <source>
        <tissue>Brain</tissue>
    </source>
</reference>
<reference evidence="13 14" key="4">
    <citation type="journal article" date="2013" name="Proc. Natl. Acad. Sci. U.S.A.">
        <title>Crystallographic insights into sodium-channel modulation by the beta4 subunit.</title>
        <authorList>
            <person name="Gilchrist J."/>
            <person name="Das S."/>
            <person name="Van Petegem F."/>
            <person name="Bosmans F."/>
        </authorList>
    </citation>
    <scope>X-RAY CRYSTALLOGRAPHY (1.72 ANGSTROMS) OF 32-157</scope>
    <scope>FUNCTION</scope>
    <scope>SUBUNIT</scope>
    <scope>SUBCELLULAR LOCATION</scope>
    <scope>TOPOLOGY</scope>
    <scope>DISULFIDE BOND</scope>
    <scope>GLYCOSYLATION</scope>
    <scope>INTERACTION WITH SCN2A</scope>
    <scope>MUTAGENESIS OF CYS-58 AND CYS-131</scope>
</reference>
<reference evidence="15" key="5">
    <citation type="journal article" date="2021" name="Proc. Natl. Acad. Sci. U.S.A.">
        <title>Comparative structural analysis of human Nav1.1 and Nav1.5 reveals mutational hotspots for sodium channelopathies.</title>
        <authorList>
            <person name="Pan X."/>
            <person name="Li Z."/>
            <person name="Jin X."/>
            <person name="Zhao Y."/>
            <person name="Huang G."/>
            <person name="Huang X."/>
            <person name="Shen Z."/>
            <person name="Cao Y."/>
            <person name="Dong M."/>
            <person name="Lei J."/>
            <person name="Yan N."/>
        </authorList>
    </citation>
    <scope>STRUCTURE BY ELECTRON MICROSCOPY (3.30 ANGSTROMS) IN COMPLEX WITH SCN1A</scope>
    <scope>DISULFIDE BONDS</scope>
</reference>
<reference key="6">
    <citation type="journal article" date="2007" name="Circulation">
        <title>SCN4B-encoded sodium channel beta4 subunit in congenital long-QT syndrome.</title>
        <authorList>
            <person name="Medeiros-Domingo A."/>
            <person name="Kaku T."/>
            <person name="Tester D.J."/>
            <person name="Iturralde-Torres P."/>
            <person name="Itty A."/>
            <person name="Ye B."/>
            <person name="Valdivia C."/>
            <person name="Ueda K."/>
            <person name="Canizales-Quinteros S."/>
            <person name="Tusie-Luna M.T."/>
            <person name="Makielski J.C."/>
            <person name="Ackerman M.J."/>
        </authorList>
    </citation>
    <scope>VARIANT LQT10 PHE-179</scope>
    <scope>CHARACTERIZATION OF VARIANT LQT10 PHE-179</scope>
</reference>
<reference key="7">
    <citation type="journal article" date="2011" name="Cardiovasc. Res.">
        <title>Mutations in sodium channel beta-subunit SCN3B are associated with early-onset lone atrial fibrillation.</title>
        <authorList>
            <person name="Olesen M.S."/>
            <person name="Jespersen T."/>
            <person name="Nielsen J.B."/>
            <person name="Liang B."/>
            <person name="Moller D.V."/>
            <person name="Hedley P."/>
            <person name="Christiansen M."/>
            <person name="Varro A."/>
            <person name="Olesen S.P."/>
            <person name="Haunso S."/>
            <person name="Schmitt N."/>
            <person name="Svendsen J.H."/>
        </authorList>
    </citation>
    <scope>TISSUE SPECIFICITY</scope>
</reference>
<reference key="8">
    <citation type="journal article" date="2013" name="Int. J. Mol. Med.">
        <title>Mutations of the SCN4B-encoded sodium channel beta4 subunit in familial atrial fibrillation.</title>
        <authorList>
            <person name="Li R.G."/>
            <person name="Wang Q."/>
            <person name="Xu Y.J."/>
            <person name="Zhang M."/>
            <person name="Qu X.K."/>
            <person name="Liu X."/>
            <person name="Fang W.Y."/>
            <person name="Yang Y.Q."/>
        </authorList>
    </citation>
    <scope>INVOLVEMENT IN ATFB17</scope>
    <scope>VARIANTS ATFB17 GLY-162 AND LEU-166</scope>
</reference>
<organism>
    <name type="scientific">Homo sapiens</name>
    <name type="common">Human</name>
    <dbReference type="NCBI Taxonomy" id="9606"/>
    <lineage>
        <taxon>Eukaryota</taxon>
        <taxon>Metazoa</taxon>
        <taxon>Chordata</taxon>
        <taxon>Craniata</taxon>
        <taxon>Vertebrata</taxon>
        <taxon>Euteleostomi</taxon>
        <taxon>Mammalia</taxon>
        <taxon>Eutheria</taxon>
        <taxon>Euarchontoglires</taxon>
        <taxon>Primates</taxon>
        <taxon>Haplorrhini</taxon>
        <taxon>Catarrhini</taxon>
        <taxon>Hominidae</taxon>
        <taxon>Homo</taxon>
    </lineage>
</organism>
<dbReference type="EMBL" id="AY149967">
    <property type="protein sequence ID" value="AAN74584.1"/>
    <property type="molecule type" value="mRNA"/>
</dbReference>
<dbReference type="EMBL" id="AP002800">
    <property type="status" value="NOT_ANNOTATED_CDS"/>
    <property type="molecule type" value="Genomic_DNA"/>
</dbReference>
<dbReference type="EMBL" id="BC035017">
    <property type="protein sequence ID" value="AAH35017.1"/>
    <property type="molecule type" value="mRNA"/>
</dbReference>
<dbReference type="CCDS" id="CCDS44744.1">
    <molecule id="Q8IWT1-3"/>
</dbReference>
<dbReference type="CCDS" id="CCDS8389.1">
    <molecule id="Q8IWT1-1"/>
</dbReference>
<dbReference type="RefSeq" id="NP_001135820.1">
    <molecule id="Q8IWT1-3"/>
    <property type="nucleotide sequence ID" value="NM_001142348.2"/>
</dbReference>
<dbReference type="RefSeq" id="NP_001135821.1">
    <molecule id="Q8IWT1-2"/>
    <property type="nucleotide sequence ID" value="NM_001142349.2"/>
</dbReference>
<dbReference type="RefSeq" id="NP_777594.1">
    <molecule id="Q8IWT1-1"/>
    <property type="nucleotide sequence ID" value="NM_174934.4"/>
</dbReference>
<dbReference type="PDB" id="4MZ2">
    <property type="method" value="X-ray"/>
    <property type="resolution" value="1.72 A"/>
    <property type="chains" value="A=32-157"/>
</dbReference>
<dbReference type="PDB" id="4MZ3">
    <property type="method" value="X-ray"/>
    <property type="resolution" value="1.74 A"/>
    <property type="chains" value="A/B=32-157"/>
</dbReference>
<dbReference type="PDB" id="5XAW">
    <property type="method" value="X-ray"/>
    <property type="resolution" value="2.10 A"/>
    <property type="chains" value="A/B=30-152"/>
</dbReference>
<dbReference type="PDB" id="6VSV">
    <property type="method" value="X-ray"/>
    <property type="resolution" value="1.62 A"/>
    <property type="chains" value="A=32-157"/>
</dbReference>
<dbReference type="PDB" id="7DTD">
    <property type="method" value="EM"/>
    <property type="resolution" value="3.30 A"/>
    <property type="chains" value="B=1-228"/>
</dbReference>
<dbReference type="PDBsum" id="4MZ2"/>
<dbReference type="PDBsum" id="4MZ3"/>
<dbReference type="PDBsum" id="5XAW"/>
<dbReference type="PDBsum" id="6VSV"/>
<dbReference type="PDBsum" id="7DTD"/>
<dbReference type="EMDB" id="EMD-30851"/>
<dbReference type="SMR" id="Q8IWT1"/>
<dbReference type="BioGRID" id="112235">
    <property type="interactions" value="5"/>
</dbReference>
<dbReference type="ComplexPortal" id="CPX-8641">
    <property type="entry name" value="Nav1.1 voltage-gated sodium channel complex, SCN1B-SCN4B variant"/>
</dbReference>
<dbReference type="ComplexPortal" id="CPX-8642">
    <property type="entry name" value="Nav1.1 voltage-gated sodium channel complex, SCN3B-SCN4B variant"/>
</dbReference>
<dbReference type="ComplexPortal" id="CPX-8645">
    <property type="entry name" value="Nav1.2 voltage-gated sodium channel complex, SCN1B-SCN4B variant"/>
</dbReference>
<dbReference type="ComplexPortal" id="CPX-8646">
    <property type="entry name" value="Nav1.2 voltage-gated sodium channel complex, SCN3B-SCN4B variant"/>
</dbReference>
<dbReference type="ComplexPortal" id="CPX-8663">
    <property type="entry name" value="Nav1.3 voltage-gated sodium channel complex, SCN3B-SCN4B variant"/>
</dbReference>
<dbReference type="ComplexPortal" id="CPX-8664">
    <property type="entry name" value="Nav1.3 voltage-gated sodium channel complex, SCN1B-SCN4B variant"/>
</dbReference>
<dbReference type="ComplexPortal" id="CPX-8666">
    <property type="entry name" value="Nav1.4 voltage-gated sodium channel complex, SCN1B-SCN4B variant"/>
</dbReference>
<dbReference type="ComplexPortal" id="CPX-8668">
    <property type="entry name" value="Nav1.4 voltage-gated sodium channel complex, SCN3B-SCN4B variant"/>
</dbReference>
<dbReference type="ComplexPortal" id="CPX-8670">
    <property type="entry name" value="Nav1.5 voltage-gated sodium channel complex, SCN1B-SCN4B variant"/>
</dbReference>
<dbReference type="ComplexPortal" id="CPX-8672">
    <property type="entry name" value="Nav1.5 voltage-gated sodium channel complex, SCN3B-SCN4B variant"/>
</dbReference>
<dbReference type="ComplexPortal" id="CPX-8674">
    <property type="entry name" value="Nav1.6 voltage-gated sodium channel complex, SCN1B-SCN4B variant"/>
</dbReference>
<dbReference type="ComplexPortal" id="CPX-8675">
    <property type="entry name" value="Nav1.6 voltage-gated sodium channel complex, SCN3B-SCN4B variant"/>
</dbReference>
<dbReference type="ComplexPortal" id="CPX-8678">
    <property type="entry name" value="Nav1.7 voltage-gated sodium channel complex, SCN1B-SCN4B variant"/>
</dbReference>
<dbReference type="ComplexPortal" id="CPX-8679">
    <property type="entry name" value="Nav1.7 voltage-gated sodium channel complex, SCN3B-SCN4B variant"/>
</dbReference>
<dbReference type="ComplexPortal" id="CPX-8682">
    <property type="entry name" value="Nav1.8 voltage-gated sodium channel complex, SCN1B-SCN4B variant"/>
</dbReference>
<dbReference type="ComplexPortal" id="CPX-8683">
    <property type="entry name" value="Nav1.8 voltage-gated sodium channel complex, SCN3B-SCN4B variant"/>
</dbReference>
<dbReference type="ComplexPortal" id="CPX-8686">
    <property type="entry name" value="Nav1.9 voltage-gated sodium channel complex, SCN1B-SCN4B variant"/>
</dbReference>
<dbReference type="ComplexPortal" id="CPX-8687">
    <property type="entry name" value="Nav1.9 voltage-gated sodium channel complex, SCN3B-SCN4B variant"/>
</dbReference>
<dbReference type="ComplexPortal" id="CPX-8692">
    <property type="entry name" value="Nax cation channel complex, SCN3B-SCN4B variant"/>
</dbReference>
<dbReference type="ComplexPortal" id="CPX-8693">
    <property type="entry name" value="Nax cation channel complex, SCN1B-SCN4B variant"/>
</dbReference>
<dbReference type="FunCoup" id="Q8IWT1">
    <property type="interactions" value="519"/>
</dbReference>
<dbReference type="IntAct" id="Q8IWT1">
    <property type="interactions" value="1"/>
</dbReference>
<dbReference type="STRING" id="9606.ENSP00000322460"/>
<dbReference type="DrugBank" id="DB05541">
    <property type="generic name" value="Brivaracetam"/>
</dbReference>
<dbReference type="DrugBank" id="DB00907">
    <property type="generic name" value="Cocaine"/>
</dbReference>
<dbReference type="DrugBank" id="DB13269">
    <property type="generic name" value="Dichlorobenzyl alcohol"/>
</dbReference>
<dbReference type="DrugBank" id="DB13961">
    <property type="generic name" value="Fish oil"/>
</dbReference>
<dbReference type="DrugBank" id="DB00776">
    <property type="generic name" value="Oxcarbazepine"/>
</dbReference>
<dbReference type="DrugBank" id="DB00243">
    <property type="generic name" value="Ranolazine"/>
</dbReference>
<dbReference type="DrugBank" id="DB00313">
    <property type="generic name" value="Valproic acid"/>
</dbReference>
<dbReference type="DrugBank" id="DB00909">
    <property type="generic name" value="Zonisamide"/>
</dbReference>
<dbReference type="DrugCentral" id="Q8IWT1"/>
<dbReference type="TCDB" id="8.A.17.2.2">
    <property type="family name" value="the na(+) channel auxiliary subunit Beta1-Beta4 (sca-Beta) family"/>
</dbReference>
<dbReference type="GlyCosmos" id="Q8IWT1">
    <property type="glycosylation" value="3 sites, No reported glycans"/>
</dbReference>
<dbReference type="GlyGen" id="Q8IWT1">
    <property type="glycosylation" value="3 sites, 1 N-linked glycan (1 site)"/>
</dbReference>
<dbReference type="iPTMnet" id="Q8IWT1"/>
<dbReference type="PhosphoSitePlus" id="Q8IWT1"/>
<dbReference type="BioMuta" id="SCN4B"/>
<dbReference type="DMDM" id="57012701"/>
<dbReference type="jPOST" id="Q8IWT1"/>
<dbReference type="MassIVE" id="Q8IWT1"/>
<dbReference type="PaxDb" id="9606-ENSP00000322460"/>
<dbReference type="PeptideAtlas" id="Q8IWT1"/>
<dbReference type="ProteomicsDB" id="22813"/>
<dbReference type="ProteomicsDB" id="70889">
    <molecule id="Q8IWT1-1"/>
</dbReference>
<dbReference type="ProteomicsDB" id="70890">
    <molecule id="Q8IWT1-2"/>
</dbReference>
<dbReference type="Antibodypedia" id="2645">
    <property type="antibodies" value="136 antibodies from 27 providers"/>
</dbReference>
<dbReference type="DNASU" id="6330"/>
<dbReference type="Ensembl" id="ENST00000324727.9">
    <molecule id="Q8IWT1-1"/>
    <property type="protein sequence ID" value="ENSP00000322460.4"/>
    <property type="gene ID" value="ENSG00000177098.9"/>
</dbReference>
<dbReference type="Ensembl" id="ENST00000529878.1">
    <molecule id="Q8IWT1-3"/>
    <property type="protein sequence ID" value="ENSP00000436343.1"/>
    <property type="gene ID" value="ENSG00000177098.9"/>
</dbReference>
<dbReference type="GeneID" id="6330"/>
<dbReference type="KEGG" id="hsa:6330"/>
<dbReference type="MANE-Select" id="ENST00000324727.9">
    <property type="protein sequence ID" value="ENSP00000322460.4"/>
    <property type="RefSeq nucleotide sequence ID" value="NM_174934.4"/>
    <property type="RefSeq protein sequence ID" value="NP_777594.1"/>
</dbReference>
<dbReference type="UCSC" id="uc001pse.4">
    <molecule id="Q8IWT1-1"/>
    <property type="organism name" value="human"/>
</dbReference>
<dbReference type="AGR" id="HGNC:10592"/>
<dbReference type="CTD" id="6330"/>
<dbReference type="DisGeNET" id="6330"/>
<dbReference type="GeneCards" id="SCN4B"/>
<dbReference type="HGNC" id="HGNC:10592">
    <property type="gene designation" value="SCN4B"/>
</dbReference>
<dbReference type="HPA" id="ENSG00000177098">
    <property type="expression patterns" value="Tissue enhanced (brain, tongue)"/>
</dbReference>
<dbReference type="MalaCards" id="SCN4B"/>
<dbReference type="MIM" id="608256">
    <property type="type" value="gene"/>
</dbReference>
<dbReference type="MIM" id="611819">
    <property type="type" value="phenotype"/>
</dbReference>
<dbReference type="neXtProt" id="NX_Q8IWT1"/>
<dbReference type="OpenTargets" id="ENSG00000177098"/>
<dbReference type="Orphanet" id="334">
    <property type="disease" value="Familial atrial fibrillation"/>
</dbReference>
<dbReference type="Orphanet" id="101016">
    <property type="disease" value="Romano-Ward syndrome"/>
</dbReference>
<dbReference type="PharmGKB" id="PA35007"/>
<dbReference type="VEuPathDB" id="HostDB:ENSG00000177098"/>
<dbReference type="eggNOG" id="ENOG502QTZ6">
    <property type="taxonomic scope" value="Eukaryota"/>
</dbReference>
<dbReference type="GeneTree" id="ENSGT01030000234556"/>
<dbReference type="HOGENOM" id="CLU_104235_0_0_1"/>
<dbReference type="InParanoid" id="Q8IWT1"/>
<dbReference type="OMA" id="HQATIIL"/>
<dbReference type="OrthoDB" id="8778219at2759"/>
<dbReference type="PAN-GO" id="Q8IWT1">
    <property type="GO annotations" value="7 GO annotations based on evolutionary models"/>
</dbReference>
<dbReference type="PhylomeDB" id="Q8IWT1"/>
<dbReference type="TreeFam" id="TF331728"/>
<dbReference type="PathwayCommons" id="Q8IWT1"/>
<dbReference type="Reactome" id="R-HSA-445095">
    <property type="pathway name" value="Interaction between L1 and Ankyrins"/>
</dbReference>
<dbReference type="Reactome" id="R-HSA-5576892">
    <property type="pathway name" value="Phase 0 - rapid depolarisation"/>
</dbReference>
<dbReference type="Reactome" id="R-HSA-9717207">
    <property type="pathway name" value="Sensory perception of sweet, bitter, and umami (glutamate) taste"/>
</dbReference>
<dbReference type="SignaLink" id="Q8IWT1"/>
<dbReference type="BioGRID-ORCS" id="6330">
    <property type="hits" value="10 hits in 1155 CRISPR screens"/>
</dbReference>
<dbReference type="ChiTaRS" id="SCN4B">
    <property type="organism name" value="human"/>
</dbReference>
<dbReference type="EvolutionaryTrace" id="Q8IWT1"/>
<dbReference type="GeneWiki" id="SCN4B"/>
<dbReference type="GenomeRNAi" id="6330"/>
<dbReference type="Pharos" id="Q8IWT1">
    <property type="development level" value="Tbio"/>
</dbReference>
<dbReference type="PRO" id="PR:Q8IWT1"/>
<dbReference type="Proteomes" id="UP000005640">
    <property type="component" value="Chromosome 11"/>
</dbReference>
<dbReference type="RNAct" id="Q8IWT1">
    <property type="molecule type" value="protein"/>
</dbReference>
<dbReference type="Bgee" id="ENSG00000177098">
    <property type="expression patterns" value="Expressed in lateral globus pallidus and 160 other cell types or tissues"/>
</dbReference>
<dbReference type="ExpressionAtlas" id="Q8IWT1">
    <property type="expression patterns" value="baseline and differential"/>
</dbReference>
<dbReference type="GO" id="GO:0014704">
    <property type="term" value="C:intercalated disc"/>
    <property type="evidence" value="ECO:0000250"/>
    <property type="project" value="BHF-UCL"/>
</dbReference>
<dbReference type="GO" id="GO:0005886">
    <property type="term" value="C:plasma membrane"/>
    <property type="evidence" value="ECO:0000314"/>
    <property type="project" value="UniProtKB"/>
</dbReference>
<dbReference type="GO" id="GO:0001518">
    <property type="term" value="C:voltage-gated sodium channel complex"/>
    <property type="evidence" value="ECO:0000314"/>
    <property type="project" value="UniProtKB"/>
</dbReference>
<dbReference type="GO" id="GO:0017080">
    <property type="term" value="F:sodium channel regulator activity"/>
    <property type="evidence" value="ECO:0000314"/>
    <property type="project" value="UniProtKB"/>
</dbReference>
<dbReference type="GO" id="GO:0044325">
    <property type="term" value="F:transmembrane transporter binding"/>
    <property type="evidence" value="ECO:0000353"/>
    <property type="project" value="BHF-UCL"/>
</dbReference>
<dbReference type="GO" id="GO:0005248">
    <property type="term" value="F:voltage-gated sodium channel activity"/>
    <property type="evidence" value="ECO:0000314"/>
    <property type="project" value="UniProtKB"/>
</dbReference>
<dbReference type="GO" id="GO:0086006">
    <property type="term" value="F:voltage-gated sodium channel activity involved in cardiac muscle cell action potential"/>
    <property type="evidence" value="ECO:0000315"/>
    <property type="project" value="BHF-UCL"/>
</dbReference>
<dbReference type="GO" id="GO:0086016">
    <property type="term" value="P:AV node cell action potential"/>
    <property type="evidence" value="ECO:0000315"/>
    <property type="project" value="BHF-UCL"/>
</dbReference>
<dbReference type="GO" id="GO:0061337">
    <property type="term" value="P:cardiac conduction"/>
    <property type="evidence" value="ECO:0000318"/>
    <property type="project" value="GO_Central"/>
</dbReference>
<dbReference type="GO" id="GO:0086002">
    <property type="term" value="P:cardiac muscle cell action potential involved in contraction"/>
    <property type="evidence" value="ECO:0000315"/>
    <property type="project" value="BHF-UCL"/>
</dbReference>
<dbReference type="GO" id="GO:0060048">
    <property type="term" value="P:cardiac muscle contraction"/>
    <property type="evidence" value="ECO:0000315"/>
    <property type="project" value="BHF-UCL"/>
</dbReference>
<dbReference type="GO" id="GO:0051649">
    <property type="term" value="P:establishment of localization in cell"/>
    <property type="evidence" value="ECO:0007669"/>
    <property type="project" value="Ensembl"/>
</dbReference>
<dbReference type="GO" id="GO:0086012">
    <property type="term" value="P:membrane depolarization during cardiac muscle cell action potential"/>
    <property type="evidence" value="ECO:0000315"/>
    <property type="project" value="BHF-UCL"/>
</dbReference>
<dbReference type="GO" id="GO:0019228">
    <property type="term" value="P:neuronal action potential"/>
    <property type="evidence" value="ECO:0000314"/>
    <property type="project" value="UniProtKB"/>
</dbReference>
<dbReference type="GO" id="GO:0010765">
    <property type="term" value="P:positive regulation of sodium ion transport"/>
    <property type="evidence" value="ECO:0000314"/>
    <property type="project" value="BHF-UCL"/>
</dbReference>
<dbReference type="GO" id="GO:0086091">
    <property type="term" value="P:regulation of heart rate by cardiac conduction"/>
    <property type="evidence" value="ECO:0000315"/>
    <property type="project" value="BHF-UCL"/>
</dbReference>
<dbReference type="GO" id="GO:0060307">
    <property type="term" value="P:regulation of ventricular cardiac muscle cell membrane repolarization"/>
    <property type="evidence" value="ECO:0000315"/>
    <property type="project" value="BHF-UCL"/>
</dbReference>
<dbReference type="GO" id="GO:0035725">
    <property type="term" value="P:sodium ion transmembrane transport"/>
    <property type="evidence" value="ECO:0000314"/>
    <property type="project" value="BHF-UCL"/>
</dbReference>
<dbReference type="GO" id="GO:0006814">
    <property type="term" value="P:sodium ion transport"/>
    <property type="evidence" value="ECO:0000314"/>
    <property type="project" value="UniProtKB"/>
</dbReference>
<dbReference type="FunFam" id="2.60.40.10:FF:001260">
    <property type="entry name" value="Sodium channel subunit beta-4"/>
    <property type="match status" value="1"/>
</dbReference>
<dbReference type="Gene3D" id="2.60.40.10">
    <property type="entry name" value="Immunoglobulins"/>
    <property type="match status" value="1"/>
</dbReference>
<dbReference type="InterPro" id="IPR007110">
    <property type="entry name" value="Ig-like_dom"/>
</dbReference>
<dbReference type="InterPro" id="IPR036179">
    <property type="entry name" value="Ig-like_dom_sf"/>
</dbReference>
<dbReference type="InterPro" id="IPR013783">
    <property type="entry name" value="Ig-like_fold"/>
</dbReference>
<dbReference type="InterPro" id="IPR003599">
    <property type="entry name" value="Ig_sub"/>
</dbReference>
<dbReference type="InterPro" id="IPR013106">
    <property type="entry name" value="Ig_V-set"/>
</dbReference>
<dbReference type="InterPro" id="IPR000920">
    <property type="entry name" value="Myelin_P0-rel"/>
</dbReference>
<dbReference type="PANTHER" id="PTHR13869">
    <property type="entry name" value="MYELIN P0 RELATED"/>
    <property type="match status" value="1"/>
</dbReference>
<dbReference type="PANTHER" id="PTHR13869:SF14">
    <property type="entry name" value="SODIUM CHANNEL SUBUNIT BETA-4"/>
    <property type="match status" value="1"/>
</dbReference>
<dbReference type="Pfam" id="PF07686">
    <property type="entry name" value="V-set"/>
    <property type="match status" value="1"/>
</dbReference>
<dbReference type="SMART" id="SM00409">
    <property type="entry name" value="IG"/>
    <property type="match status" value="1"/>
</dbReference>
<dbReference type="SUPFAM" id="SSF48726">
    <property type="entry name" value="Immunoglobulin"/>
    <property type="match status" value="1"/>
</dbReference>
<dbReference type="PROSITE" id="PS50835">
    <property type="entry name" value="IG_LIKE"/>
    <property type="match status" value="1"/>
</dbReference>
<gene>
    <name evidence="12" type="primary">SCN4B</name>
</gene>
<name>SCN4B_HUMAN</name>
<keyword id="KW-0002">3D-structure</keyword>
<keyword id="KW-0025">Alternative splicing</keyword>
<keyword id="KW-1020">Atrial fibrillation</keyword>
<keyword id="KW-1003">Cell membrane</keyword>
<keyword id="KW-0225">Disease variant</keyword>
<keyword id="KW-1015">Disulfide bond</keyword>
<keyword id="KW-0325">Glycoprotein</keyword>
<keyword id="KW-0393">Immunoglobulin domain</keyword>
<keyword id="KW-0406">Ion transport</keyword>
<keyword id="KW-0454">Long QT syndrome</keyword>
<keyword id="KW-0472">Membrane</keyword>
<keyword id="KW-1267">Proteomics identification</keyword>
<keyword id="KW-1185">Reference proteome</keyword>
<keyword id="KW-0732">Signal</keyword>
<keyword id="KW-0915">Sodium</keyword>
<keyword id="KW-0739">Sodium transport</keyword>
<keyword id="KW-0812">Transmembrane</keyword>
<keyword id="KW-1133">Transmembrane helix</keyword>
<keyword id="KW-0813">Transport</keyword>
<comment type="function">
    <text evidence="8 9">Regulatory subunit of multiple voltage-gated sodium (Nav) channels directly mediating the depolarization of excitable membranes. Navs, also called VGSCs (voltage-gated sodium channels) or VDSCs (voltage-dependent sodium channels), operate by switching between closed and open conformations depending on the voltage difference across the membrane. In the open conformation they allow Na(+) ions to selectively pass through the pore, along their electrochemical gradient. The influx of Na+ ions provokes membrane depolarization, initiating the propagation of electrical signals throughout cells and tissues. The accessory beta subunits participate in localization and functional modulation of the Nav channels (PubMed:24297919). Modulates the activity of SCN1A/Nav1.1 (PubMed:33712547). Modulates the activity of SCN2A/Nav1.2 (PubMed:24297919).</text>
</comment>
<comment type="subunit">
    <text evidence="8 9">A voltage-gated sodium (Nav) channel consists of an ion-conducting pore-forming alpha subunit functional on its own that is regulated by one or more beta subunits. The beta subunit SCN4B is disulfide-linked to the pore-forming alpha subunit (PubMed:24297919). Interacts with SCN1A; regulatory subunit of SCN1A/Nav1.1 (PubMed:33712547). Interacts with SCN2A; regulatory subunit of SCN2A/Nav1.2 (PubMed:24297919).</text>
</comment>
<comment type="interaction">
    <interactant intactId="EBI-23705473">
        <id>Q8IWT1</id>
    </interactant>
    <interactant intactId="EBI-2799703">
        <id>O95070</id>
        <label>YIF1A</label>
    </interactant>
    <organismsDiffer>false</organismsDiffer>
    <experiments>3</experiments>
</comment>
<comment type="subcellular location">
    <subcellularLocation>
        <location evidence="8">Cell membrane</location>
        <topology evidence="8">Single-pass type I membrane protein</topology>
    </subcellularLocation>
</comment>
<comment type="alternative products">
    <event type="alternative splicing"/>
    <isoform>
        <id>Q8IWT1-1</id>
        <name>1</name>
        <sequence type="displayed"/>
    </isoform>
    <isoform>
        <id>Q8IWT1-2</id>
        <name>2</name>
        <sequence type="described" ref="VSP_053913"/>
    </isoform>
    <isoform>
        <id>Q8IWT1-3</id>
        <name>3</name>
        <sequence type="described" ref="VSP_046971"/>
    </isoform>
</comment>
<comment type="tissue specificity">
    <text evidence="4 6">Expressed at a high level in dorsal root ganglia, at a lower level in brain, spinal cord, skeletal muscle and heart. Expressed in the atrium.</text>
</comment>
<comment type="PTM">
    <text>Contains an interchain disulfide bond with SCN2A.</text>
</comment>
<comment type="PTM">
    <text evidence="8">N-glycosylated.</text>
</comment>
<comment type="disease" evidence="5">
    <disease id="DI-00687">
        <name>Long QT syndrome 10</name>
        <acronym>LQT10</acronym>
        <description>A heart disorder characterized by a prolonged QT interval on the ECG and polymorphic ventricular arrhythmias. They cause syncope and sudden death in response to exercise or emotional stress, and can present with a sentinel event of sudden cardiac death in infancy.</description>
        <dbReference type="MIM" id="611819"/>
    </disease>
    <text>The disease is caused by variants affecting the gene represented in this entry.</text>
</comment>
<comment type="disease" evidence="7">
    <disease id="DI-04164">
        <name>Atrial fibrillation, familial, 17</name>
        <acronym>ATFB17</acronym>
        <description>A familial form of atrial fibrillation, a common sustained cardiac rhythm disturbance. Atrial fibrillation is characterized by disorganized atrial electrical activity and ineffective atrial contraction promoting blood stasis in the atria and reduces ventricular filling. It can result in palpitations, syncope, thromboembolic stroke, and congestive heart failure.</description>
        <dbReference type="MIM" id="611819"/>
    </disease>
    <text>The disease is caused by variants affecting the gene represented in this entry.</text>
</comment>
<comment type="similarity">
    <text evidence="10">Belongs to the sodium channel auxiliary subunit SCN4B (TC 8.A.17) family.</text>
</comment>